<protein>
    <recommendedName>
        <fullName evidence="1">Ribosomal RNA small subunit methyltransferase A</fullName>
        <ecNumber evidence="1">2.1.1.182</ecNumber>
    </recommendedName>
    <alternativeName>
        <fullName evidence="1">16S rRNA (adenine(1518)-N(6)/adenine(1519)-N(6))-dimethyltransferase</fullName>
    </alternativeName>
    <alternativeName>
        <fullName evidence="1">16S rRNA dimethyladenosine transferase</fullName>
    </alternativeName>
    <alternativeName>
        <fullName evidence="1">16S rRNA dimethylase</fullName>
    </alternativeName>
    <alternativeName>
        <fullName evidence="1">S-adenosylmethionine-6-N', N'-adenosyl(rRNA) dimethyltransferase</fullName>
    </alternativeName>
</protein>
<gene>
    <name evidence="1" type="primary">rsmA</name>
    <name evidence="1" type="synonym">ksgA</name>
    <name type="ordered locus">P9301_09251</name>
</gene>
<keyword id="KW-0963">Cytoplasm</keyword>
<keyword id="KW-0489">Methyltransferase</keyword>
<keyword id="KW-1185">Reference proteome</keyword>
<keyword id="KW-0694">RNA-binding</keyword>
<keyword id="KW-0698">rRNA processing</keyword>
<keyword id="KW-0949">S-adenosyl-L-methionine</keyword>
<keyword id="KW-0808">Transferase</keyword>
<feature type="chain" id="PRO_1000056650" description="Ribosomal RNA small subunit methyltransferase A">
    <location>
        <begin position="1"/>
        <end position="274"/>
    </location>
</feature>
<feature type="binding site" evidence="1">
    <location>
        <position position="15"/>
    </location>
    <ligand>
        <name>S-adenosyl-L-methionine</name>
        <dbReference type="ChEBI" id="CHEBI:59789"/>
    </ligand>
</feature>
<feature type="binding site" evidence="1">
    <location>
        <position position="17"/>
    </location>
    <ligand>
        <name>S-adenosyl-L-methionine</name>
        <dbReference type="ChEBI" id="CHEBI:59789"/>
    </ligand>
</feature>
<feature type="binding site" evidence="1">
    <location>
        <position position="42"/>
    </location>
    <ligand>
        <name>S-adenosyl-L-methionine</name>
        <dbReference type="ChEBI" id="CHEBI:59789"/>
    </ligand>
</feature>
<feature type="binding site" evidence="1">
    <location>
        <position position="64"/>
    </location>
    <ligand>
        <name>S-adenosyl-L-methionine</name>
        <dbReference type="ChEBI" id="CHEBI:59789"/>
    </ligand>
</feature>
<feature type="binding site" evidence="1">
    <location>
        <position position="89"/>
    </location>
    <ligand>
        <name>S-adenosyl-L-methionine</name>
        <dbReference type="ChEBI" id="CHEBI:59789"/>
    </ligand>
</feature>
<feature type="binding site" evidence="1">
    <location>
        <position position="108"/>
    </location>
    <ligand>
        <name>S-adenosyl-L-methionine</name>
        <dbReference type="ChEBI" id="CHEBI:59789"/>
    </ligand>
</feature>
<dbReference type="EC" id="2.1.1.182" evidence="1"/>
<dbReference type="EMBL" id="CP000576">
    <property type="protein sequence ID" value="ABO17548.1"/>
    <property type="molecule type" value="Genomic_DNA"/>
</dbReference>
<dbReference type="RefSeq" id="WP_011862896.1">
    <property type="nucleotide sequence ID" value="NC_009091.1"/>
</dbReference>
<dbReference type="SMR" id="A3PCS3"/>
<dbReference type="STRING" id="167546.P9301_09251"/>
<dbReference type="KEGG" id="pmg:P9301_09251"/>
<dbReference type="eggNOG" id="COG0030">
    <property type="taxonomic scope" value="Bacteria"/>
</dbReference>
<dbReference type="HOGENOM" id="CLU_041220_0_1_3"/>
<dbReference type="OrthoDB" id="9814755at2"/>
<dbReference type="Proteomes" id="UP000001430">
    <property type="component" value="Chromosome"/>
</dbReference>
<dbReference type="GO" id="GO:0005829">
    <property type="term" value="C:cytosol"/>
    <property type="evidence" value="ECO:0007669"/>
    <property type="project" value="TreeGrafter"/>
</dbReference>
<dbReference type="GO" id="GO:0052908">
    <property type="term" value="F:16S rRNA (adenine(1518)-N(6)/adenine(1519)-N(6))-dimethyltransferase activity"/>
    <property type="evidence" value="ECO:0007669"/>
    <property type="project" value="UniProtKB-EC"/>
</dbReference>
<dbReference type="GO" id="GO:0003723">
    <property type="term" value="F:RNA binding"/>
    <property type="evidence" value="ECO:0007669"/>
    <property type="project" value="UniProtKB-KW"/>
</dbReference>
<dbReference type="CDD" id="cd02440">
    <property type="entry name" value="AdoMet_MTases"/>
    <property type="match status" value="1"/>
</dbReference>
<dbReference type="Gene3D" id="1.10.8.100">
    <property type="entry name" value="Ribosomal RNA adenine dimethylase-like, domain 2"/>
    <property type="match status" value="1"/>
</dbReference>
<dbReference type="Gene3D" id="3.40.50.150">
    <property type="entry name" value="Vaccinia Virus protein VP39"/>
    <property type="match status" value="1"/>
</dbReference>
<dbReference type="HAMAP" id="MF_00607">
    <property type="entry name" value="16SrRNA_methyltr_A"/>
    <property type="match status" value="1"/>
</dbReference>
<dbReference type="InterPro" id="IPR001737">
    <property type="entry name" value="KsgA/Erm"/>
</dbReference>
<dbReference type="InterPro" id="IPR023165">
    <property type="entry name" value="rRNA_Ade_diMease-like_C"/>
</dbReference>
<dbReference type="InterPro" id="IPR020596">
    <property type="entry name" value="rRNA_Ade_Mease_Trfase_CS"/>
</dbReference>
<dbReference type="InterPro" id="IPR020598">
    <property type="entry name" value="rRNA_Ade_methylase_Trfase_N"/>
</dbReference>
<dbReference type="InterPro" id="IPR011530">
    <property type="entry name" value="rRNA_adenine_dimethylase"/>
</dbReference>
<dbReference type="InterPro" id="IPR029063">
    <property type="entry name" value="SAM-dependent_MTases_sf"/>
</dbReference>
<dbReference type="NCBIfam" id="TIGR00755">
    <property type="entry name" value="ksgA"/>
    <property type="match status" value="1"/>
</dbReference>
<dbReference type="PANTHER" id="PTHR11727">
    <property type="entry name" value="DIMETHYLADENOSINE TRANSFERASE"/>
    <property type="match status" value="1"/>
</dbReference>
<dbReference type="PANTHER" id="PTHR11727:SF7">
    <property type="entry name" value="DIMETHYLADENOSINE TRANSFERASE-RELATED"/>
    <property type="match status" value="1"/>
</dbReference>
<dbReference type="Pfam" id="PF00398">
    <property type="entry name" value="RrnaAD"/>
    <property type="match status" value="1"/>
</dbReference>
<dbReference type="SMART" id="SM00650">
    <property type="entry name" value="rADc"/>
    <property type="match status" value="1"/>
</dbReference>
<dbReference type="SUPFAM" id="SSF53335">
    <property type="entry name" value="S-adenosyl-L-methionine-dependent methyltransferases"/>
    <property type="match status" value="1"/>
</dbReference>
<dbReference type="PROSITE" id="PS01131">
    <property type="entry name" value="RRNA_A_DIMETH"/>
    <property type="match status" value="1"/>
</dbReference>
<dbReference type="PROSITE" id="PS51689">
    <property type="entry name" value="SAM_RNA_A_N6_MT"/>
    <property type="match status" value="1"/>
</dbReference>
<name>RSMA_PROM0</name>
<reference key="1">
    <citation type="journal article" date="2007" name="PLoS Genet.">
        <title>Patterns and implications of gene gain and loss in the evolution of Prochlorococcus.</title>
        <authorList>
            <person name="Kettler G.C."/>
            <person name="Martiny A.C."/>
            <person name="Huang K."/>
            <person name="Zucker J."/>
            <person name="Coleman M.L."/>
            <person name="Rodrigue S."/>
            <person name="Chen F."/>
            <person name="Lapidus A."/>
            <person name="Ferriera S."/>
            <person name="Johnson J."/>
            <person name="Steglich C."/>
            <person name="Church G.M."/>
            <person name="Richardson P."/>
            <person name="Chisholm S.W."/>
        </authorList>
    </citation>
    <scope>NUCLEOTIDE SEQUENCE [LARGE SCALE GENOMIC DNA]</scope>
    <source>
        <strain>MIT 9301</strain>
    </source>
</reference>
<organism>
    <name type="scientific">Prochlorococcus marinus (strain MIT 9301)</name>
    <dbReference type="NCBI Taxonomy" id="167546"/>
    <lineage>
        <taxon>Bacteria</taxon>
        <taxon>Bacillati</taxon>
        <taxon>Cyanobacteriota</taxon>
        <taxon>Cyanophyceae</taxon>
        <taxon>Synechococcales</taxon>
        <taxon>Prochlorococcaceae</taxon>
        <taxon>Prochlorococcus</taxon>
    </lineage>
</organism>
<proteinExistence type="inferred from homology"/>
<comment type="function">
    <text evidence="1">Specifically dimethylates two adjacent adenosines (A1518 and A1519) in the loop of a conserved hairpin near the 3'-end of 16S rRNA in the 30S particle. May play a critical role in biogenesis of 30S subunits.</text>
</comment>
<comment type="catalytic activity">
    <reaction evidence="1">
        <text>adenosine(1518)/adenosine(1519) in 16S rRNA + 4 S-adenosyl-L-methionine = N(6)-dimethyladenosine(1518)/N(6)-dimethyladenosine(1519) in 16S rRNA + 4 S-adenosyl-L-homocysteine + 4 H(+)</text>
        <dbReference type="Rhea" id="RHEA:19609"/>
        <dbReference type="Rhea" id="RHEA-COMP:10232"/>
        <dbReference type="Rhea" id="RHEA-COMP:10233"/>
        <dbReference type="ChEBI" id="CHEBI:15378"/>
        <dbReference type="ChEBI" id="CHEBI:57856"/>
        <dbReference type="ChEBI" id="CHEBI:59789"/>
        <dbReference type="ChEBI" id="CHEBI:74411"/>
        <dbReference type="ChEBI" id="CHEBI:74493"/>
        <dbReference type="EC" id="2.1.1.182"/>
    </reaction>
</comment>
<comment type="subcellular location">
    <subcellularLocation>
        <location evidence="1">Cytoplasm</location>
    </subcellularLocation>
</comment>
<comment type="similarity">
    <text evidence="1">Belongs to the class I-like SAM-binding methyltransferase superfamily. rRNA adenine N(6)-methyltransferase family. RsmA subfamily.</text>
</comment>
<sequence>MNSKNYHQKKRFGQHWLVNKKILEKIKEIAVLNENDFILEIGPGKGALTSKLLNSEIKKLHAIELDKDLINLLNDKFNNNDKFSLQQGDILSVNLDSINKKITKVIANIPYNITGPILDIFIGRLGIIRKYNYEKIIFLMQKDVVDRILSKEGSPNAGALSIRMQLLSKIKRICDVPPSSFSPPPKVFSSLVVFEPIKNDLRLDISLEKYIDKLLRISFNSRRKMLRNTLNTILSNEEINELSESSKVCFNLRPQDISIDQWIKLAENCIKIKK</sequence>
<evidence type="ECO:0000255" key="1">
    <source>
        <dbReference type="HAMAP-Rule" id="MF_00607"/>
    </source>
</evidence>
<accession>A3PCS3</accession>